<dbReference type="EC" id="5.3.1.16" evidence="1"/>
<dbReference type="EMBL" id="CP000521">
    <property type="protein sequence ID" value="ABO13628.1"/>
    <property type="molecule type" value="Genomic_DNA"/>
</dbReference>
<dbReference type="RefSeq" id="WP_000905538.1">
    <property type="nucleotide sequence ID" value="NZ_CP053098.1"/>
</dbReference>
<dbReference type="SMR" id="A3M9N4"/>
<dbReference type="GeneID" id="92895476"/>
<dbReference type="KEGG" id="acb:A1S_3238"/>
<dbReference type="HOGENOM" id="CLU_048577_1_1_6"/>
<dbReference type="UniPathway" id="UPA00031">
    <property type="reaction ID" value="UER00009"/>
</dbReference>
<dbReference type="GO" id="GO:0005737">
    <property type="term" value="C:cytoplasm"/>
    <property type="evidence" value="ECO:0007669"/>
    <property type="project" value="UniProtKB-SubCell"/>
</dbReference>
<dbReference type="GO" id="GO:0003949">
    <property type="term" value="F:1-(5-phosphoribosyl)-5-[(5-phosphoribosylamino)methylideneamino]imidazole-4-carboxamide isomerase activity"/>
    <property type="evidence" value="ECO:0007669"/>
    <property type="project" value="UniProtKB-UniRule"/>
</dbReference>
<dbReference type="GO" id="GO:0000105">
    <property type="term" value="P:L-histidine biosynthetic process"/>
    <property type="evidence" value="ECO:0007669"/>
    <property type="project" value="UniProtKB-UniRule"/>
</dbReference>
<dbReference type="GO" id="GO:0000162">
    <property type="term" value="P:L-tryptophan biosynthetic process"/>
    <property type="evidence" value="ECO:0007669"/>
    <property type="project" value="TreeGrafter"/>
</dbReference>
<dbReference type="CDD" id="cd04732">
    <property type="entry name" value="HisA"/>
    <property type="match status" value="1"/>
</dbReference>
<dbReference type="FunFam" id="3.20.20.70:FF:000009">
    <property type="entry name" value="1-(5-phosphoribosyl)-5-[(5-phosphoribosylamino)methylideneamino] imidazole-4-carboxamide isomerase"/>
    <property type="match status" value="1"/>
</dbReference>
<dbReference type="Gene3D" id="3.20.20.70">
    <property type="entry name" value="Aldolase class I"/>
    <property type="match status" value="1"/>
</dbReference>
<dbReference type="HAMAP" id="MF_01014">
    <property type="entry name" value="HisA"/>
    <property type="match status" value="1"/>
</dbReference>
<dbReference type="InterPro" id="IPR013785">
    <property type="entry name" value="Aldolase_TIM"/>
</dbReference>
<dbReference type="InterPro" id="IPR006062">
    <property type="entry name" value="His_biosynth"/>
</dbReference>
<dbReference type="InterPro" id="IPR006063">
    <property type="entry name" value="HisA_bact_arch"/>
</dbReference>
<dbReference type="InterPro" id="IPR044524">
    <property type="entry name" value="Isoase_HisA-like"/>
</dbReference>
<dbReference type="InterPro" id="IPR023016">
    <property type="entry name" value="Isoase_HisA-like_bact"/>
</dbReference>
<dbReference type="InterPro" id="IPR011060">
    <property type="entry name" value="RibuloseP-bd_barrel"/>
</dbReference>
<dbReference type="NCBIfam" id="TIGR00007">
    <property type="entry name" value="1-(5-phosphoribosyl)-5-[(5-phosphoribosylamino)methylideneamino]imidazole-4-carboxamide isomerase"/>
    <property type="match status" value="1"/>
</dbReference>
<dbReference type="PANTHER" id="PTHR43090">
    <property type="entry name" value="1-(5-PHOSPHORIBOSYL)-5-[(5-PHOSPHORIBOSYLAMINO)METHYLIDENEAMINO] IMIDAZOLE-4-CARBOXAMIDE ISOMERASE"/>
    <property type="match status" value="1"/>
</dbReference>
<dbReference type="PANTHER" id="PTHR43090:SF2">
    <property type="entry name" value="1-(5-PHOSPHORIBOSYL)-5-[(5-PHOSPHORIBOSYLAMINO)METHYLIDENEAMINO] IMIDAZOLE-4-CARBOXAMIDE ISOMERASE"/>
    <property type="match status" value="1"/>
</dbReference>
<dbReference type="Pfam" id="PF00977">
    <property type="entry name" value="His_biosynth"/>
    <property type="match status" value="1"/>
</dbReference>
<dbReference type="SUPFAM" id="SSF51366">
    <property type="entry name" value="Ribulose-phoshate binding barrel"/>
    <property type="match status" value="1"/>
</dbReference>
<sequence>MLIIPAIDLKDGKCVRLKQGRMEDDTVFSDDPVATAQHWVNEGARRLHLVDLNGAFAGTPIHKPVVEAIAKAQPELPIQIGGGIRSLETIEHYLEAGVTFVIIGTKAVQEPEFVEEACKRFAGHIIVGIDAMNGMVATDGWANVTDVKATDLAKRFADAGVSSIVYTDIARDGMMQGVNVEQTVNLAQYSGLPVIASGGVTNLDDVRNLKGQPGILGAITGRAIYEGTLNLREAQLLLDENRL</sequence>
<organism>
    <name type="scientific">Acinetobacter baumannii (strain ATCC 17978 / DSM 105126 / CIP 53.77 / LMG 1025 / NCDC KC755 / 5377)</name>
    <dbReference type="NCBI Taxonomy" id="400667"/>
    <lineage>
        <taxon>Bacteria</taxon>
        <taxon>Pseudomonadati</taxon>
        <taxon>Pseudomonadota</taxon>
        <taxon>Gammaproteobacteria</taxon>
        <taxon>Moraxellales</taxon>
        <taxon>Moraxellaceae</taxon>
        <taxon>Acinetobacter</taxon>
        <taxon>Acinetobacter calcoaceticus/baumannii complex</taxon>
    </lineage>
</organism>
<comment type="catalytic activity">
    <reaction evidence="1">
        <text>1-(5-phospho-beta-D-ribosyl)-5-[(5-phospho-beta-D-ribosylamino)methylideneamino]imidazole-4-carboxamide = 5-[(5-phospho-1-deoxy-D-ribulos-1-ylimino)methylamino]-1-(5-phospho-beta-D-ribosyl)imidazole-4-carboxamide</text>
        <dbReference type="Rhea" id="RHEA:15469"/>
        <dbReference type="ChEBI" id="CHEBI:58435"/>
        <dbReference type="ChEBI" id="CHEBI:58525"/>
        <dbReference type="EC" id="5.3.1.16"/>
    </reaction>
</comment>
<comment type="pathway">
    <text evidence="1">Amino-acid biosynthesis; L-histidine biosynthesis; L-histidine from 5-phospho-alpha-D-ribose 1-diphosphate: step 4/9.</text>
</comment>
<comment type="subcellular location">
    <subcellularLocation>
        <location evidence="1">Cytoplasm</location>
    </subcellularLocation>
</comment>
<comment type="similarity">
    <text evidence="1">Belongs to the HisA/HisF family.</text>
</comment>
<name>HIS4_ACIBT</name>
<reference key="1">
    <citation type="journal article" date="2007" name="Genes Dev.">
        <title>New insights into Acinetobacter baumannii pathogenesis revealed by high-density pyrosequencing and transposon mutagenesis.</title>
        <authorList>
            <person name="Smith M.G."/>
            <person name="Gianoulis T.A."/>
            <person name="Pukatzki S."/>
            <person name="Mekalanos J.J."/>
            <person name="Ornston L.N."/>
            <person name="Gerstein M."/>
            <person name="Snyder M."/>
        </authorList>
    </citation>
    <scope>NUCLEOTIDE SEQUENCE [LARGE SCALE GENOMIC DNA]</scope>
    <source>
        <strain>ATCC 17978 / DSM 105126 / CIP 53.77 / LMG 1025 / NCDC KC755 / 5377</strain>
    </source>
</reference>
<evidence type="ECO:0000255" key="1">
    <source>
        <dbReference type="HAMAP-Rule" id="MF_01014"/>
    </source>
</evidence>
<gene>
    <name evidence="1" type="primary">hisA</name>
    <name type="ordered locus">A1S_3238</name>
</gene>
<protein>
    <recommendedName>
        <fullName evidence="1">1-(5-phosphoribosyl)-5-[(5-phosphoribosylamino)methylideneamino] imidazole-4-carboxamide isomerase</fullName>
        <ecNumber evidence="1">5.3.1.16</ecNumber>
    </recommendedName>
    <alternativeName>
        <fullName evidence="1">Phosphoribosylformimino-5-aminoimidazole carboxamide ribotide isomerase</fullName>
    </alternativeName>
</protein>
<accession>A3M9N4</accession>
<keyword id="KW-0028">Amino-acid biosynthesis</keyword>
<keyword id="KW-0963">Cytoplasm</keyword>
<keyword id="KW-0368">Histidine biosynthesis</keyword>
<keyword id="KW-0413">Isomerase</keyword>
<proteinExistence type="inferred from homology"/>
<feature type="chain" id="PRO_1000063178" description="1-(5-phosphoribosyl)-5-[(5-phosphoribosylamino)methylideneamino] imidazole-4-carboxamide isomerase">
    <location>
        <begin position="1"/>
        <end position="243"/>
    </location>
</feature>
<feature type="active site" description="Proton acceptor" evidence="1">
    <location>
        <position position="8"/>
    </location>
</feature>
<feature type="active site" description="Proton donor" evidence="1">
    <location>
        <position position="130"/>
    </location>
</feature>